<accession>Q7M757</accession>
<accession>Q3UY45</accession>
<sequence>MAVRMMQGVQAVYLESDAFLVCLNHALSTEKEEVMGLCIGQLNDHGRSDSRLAYAGAEMCTVAKKMEATRIVHIHSVIILRRSDKTKDRVEISPEQLSAASIEAERLAEQTGRPMRVVGWYHSHPHITVWPSHVDVRTQAMYQMMDQSFVGLIFACFIEDKPTKIGRVLYTCFQSVQASKSSEYERLEIPIHIVPRTTIGTVCLRSAIELPGILCQEEQEAYRRIHGLTHLDSVTKIHNGSVFTKHLCSQMSAVCGPLLQWLEDRLEQNQQRLQELEQEKEDLMEELSSLE</sequence>
<name>BRC3L_MOUSE</name>
<organism>
    <name type="scientific">Mus musculus</name>
    <name type="common">Mouse</name>
    <dbReference type="NCBI Taxonomy" id="10090"/>
    <lineage>
        <taxon>Eukaryota</taxon>
        <taxon>Metazoa</taxon>
        <taxon>Chordata</taxon>
        <taxon>Craniata</taxon>
        <taxon>Vertebrata</taxon>
        <taxon>Euteleostomi</taxon>
        <taxon>Mammalia</taxon>
        <taxon>Eutheria</taxon>
        <taxon>Euarchontoglires</taxon>
        <taxon>Glires</taxon>
        <taxon>Rodentia</taxon>
        <taxon>Myomorpha</taxon>
        <taxon>Muroidea</taxon>
        <taxon>Muridae</taxon>
        <taxon>Murinae</taxon>
        <taxon>Mus</taxon>
        <taxon>Mus</taxon>
    </lineage>
</organism>
<comment type="function">
    <text evidence="1">Metalloprotease that specifically cleaves 'Lys-63'-linked polyubiquitin chains.</text>
</comment>
<comment type="similarity">
    <text evidence="4">Belongs to the peptidase M67A family. BRCC36 subfamily.</text>
</comment>
<gene>
    <name evidence="5" type="primary">Brcc3dc</name>
    <name type="synonym">C6.1al</name>
    <name evidence="5" type="synonym">Gm5136</name>
</gene>
<evidence type="ECO:0000250" key="1">
    <source>
        <dbReference type="UniProtKB" id="P46737"/>
    </source>
</evidence>
<evidence type="ECO:0000255" key="2"/>
<evidence type="ECO:0000255" key="3">
    <source>
        <dbReference type="PROSITE-ProRule" id="PRU01182"/>
    </source>
</evidence>
<evidence type="ECO:0000305" key="4"/>
<evidence type="ECO:0000312" key="5">
    <source>
        <dbReference type="MGI" id="MGI:3647286"/>
    </source>
</evidence>
<proteinExistence type="evidence at transcript level"/>
<reference key="1">
    <citation type="journal article" date="2004" name="Genome Res.">
        <title>The status, quality, and expansion of the NIH full-length cDNA project: the Mammalian Gene Collection (MGC).</title>
        <authorList>
            <consortium name="The MGC Project Team"/>
        </authorList>
    </citation>
    <scope>NUCLEOTIDE SEQUENCE [LARGE SCALE MRNA]</scope>
    <source>
        <tissue>Brain</tissue>
    </source>
</reference>
<reference key="2">
    <citation type="journal article" date="2005" name="Science">
        <title>The transcriptional landscape of the mammalian genome.</title>
        <authorList>
            <person name="Carninci P."/>
            <person name="Kasukawa T."/>
            <person name="Katayama S."/>
            <person name="Gough J."/>
            <person name="Frith M.C."/>
            <person name="Maeda N."/>
            <person name="Oyama R."/>
            <person name="Ravasi T."/>
            <person name="Lenhard B."/>
            <person name="Wells C."/>
            <person name="Kodzius R."/>
            <person name="Shimokawa K."/>
            <person name="Bajic V.B."/>
            <person name="Brenner S.E."/>
            <person name="Batalov S."/>
            <person name="Forrest A.R."/>
            <person name="Zavolan M."/>
            <person name="Davis M.J."/>
            <person name="Wilming L.G."/>
            <person name="Aidinis V."/>
            <person name="Allen J.E."/>
            <person name="Ambesi-Impiombato A."/>
            <person name="Apweiler R."/>
            <person name="Aturaliya R.N."/>
            <person name="Bailey T.L."/>
            <person name="Bansal M."/>
            <person name="Baxter L."/>
            <person name="Beisel K.W."/>
            <person name="Bersano T."/>
            <person name="Bono H."/>
            <person name="Chalk A.M."/>
            <person name="Chiu K.P."/>
            <person name="Choudhary V."/>
            <person name="Christoffels A."/>
            <person name="Clutterbuck D.R."/>
            <person name="Crowe M.L."/>
            <person name="Dalla E."/>
            <person name="Dalrymple B.P."/>
            <person name="de Bono B."/>
            <person name="Della Gatta G."/>
            <person name="di Bernardo D."/>
            <person name="Down T."/>
            <person name="Engstrom P."/>
            <person name="Fagiolini M."/>
            <person name="Faulkner G."/>
            <person name="Fletcher C.F."/>
            <person name="Fukushima T."/>
            <person name="Furuno M."/>
            <person name="Futaki S."/>
            <person name="Gariboldi M."/>
            <person name="Georgii-Hemming P."/>
            <person name="Gingeras T.R."/>
            <person name="Gojobori T."/>
            <person name="Green R.E."/>
            <person name="Gustincich S."/>
            <person name="Harbers M."/>
            <person name="Hayashi Y."/>
            <person name="Hensch T.K."/>
            <person name="Hirokawa N."/>
            <person name="Hill D."/>
            <person name="Huminiecki L."/>
            <person name="Iacono M."/>
            <person name="Ikeo K."/>
            <person name="Iwama A."/>
            <person name="Ishikawa T."/>
            <person name="Jakt M."/>
            <person name="Kanapin A."/>
            <person name="Katoh M."/>
            <person name="Kawasawa Y."/>
            <person name="Kelso J."/>
            <person name="Kitamura H."/>
            <person name="Kitano H."/>
            <person name="Kollias G."/>
            <person name="Krishnan S.P."/>
            <person name="Kruger A."/>
            <person name="Kummerfeld S.K."/>
            <person name="Kurochkin I.V."/>
            <person name="Lareau L.F."/>
            <person name="Lazarevic D."/>
            <person name="Lipovich L."/>
            <person name="Liu J."/>
            <person name="Liuni S."/>
            <person name="McWilliam S."/>
            <person name="Madan Babu M."/>
            <person name="Madera M."/>
            <person name="Marchionni L."/>
            <person name="Matsuda H."/>
            <person name="Matsuzawa S."/>
            <person name="Miki H."/>
            <person name="Mignone F."/>
            <person name="Miyake S."/>
            <person name="Morris K."/>
            <person name="Mottagui-Tabar S."/>
            <person name="Mulder N."/>
            <person name="Nakano N."/>
            <person name="Nakauchi H."/>
            <person name="Ng P."/>
            <person name="Nilsson R."/>
            <person name="Nishiguchi S."/>
            <person name="Nishikawa S."/>
            <person name="Nori F."/>
            <person name="Ohara O."/>
            <person name="Okazaki Y."/>
            <person name="Orlando V."/>
            <person name="Pang K.C."/>
            <person name="Pavan W.J."/>
            <person name="Pavesi G."/>
            <person name="Pesole G."/>
            <person name="Petrovsky N."/>
            <person name="Piazza S."/>
            <person name="Reed J."/>
            <person name="Reid J.F."/>
            <person name="Ring B.Z."/>
            <person name="Ringwald M."/>
            <person name="Rost B."/>
            <person name="Ruan Y."/>
            <person name="Salzberg S.L."/>
            <person name="Sandelin A."/>
            <person name="Schneider C."/>
            <person name="Schoenbach C."/>
            <person name="Sekiguchi K."/>
            <person name="Semple C.A."/>
            <person name="Seno S."/>
            <person name="Sessa L."/>
            <person name="Sheng Y."/>
            <person name="Shibata Y."/>
            <person name="Shimada H."/>
            <person name="Shimada K."/>
            <person name="Silva D."/>
            <person name="Sinclair B."/>
            <person name="Sperling S."/>
            <person name="Stupka E."/>
            <person name="Sugiura K."/>
            <person name="Sultana R."/>
            <person name="Takenaka Y."/>
            <person name="Taki K."/>
            <person name="Tammoja K."/>
            <person name="Tan S.L."/>
            <person name="Tang S."/>
            <person name="Taylor M.S."/>
            <person name="Tegner J."/>
            <person name="Teichmann S.A."/>
            <person name="Ueda H.R."/>
            <person name="van Nimwegen E."/>
            <person name="Verardo R."/>
            <person name="Wei C.L."/>
            <person name="Yagi K."/>
            <person name="Yamanishi H."/>
            <person name="Zabarovsky E."/>
            <person name="Zhu S."/>
            <person name="Zimmer A."/>
            <person name="Hide W."/>
            <person name="Bult C."/>
            <person name="Grimmond S.M."/>
            <person name="Teasdale R.D."/>
            <person name="Liu E.T."/>
            <person name="Brusic V."/>
            <person name="Quackenbush J."/>
            <person name="Wahlestedt C."/>
            <person name="Mattick J.S."/>
            <person name="Hume D.A."/>
            <person name="Kai C."/>
            <person name="Sasaki D."/>
            <person name="Tomaru Y."/>
            <person name="Fukuda S."/>
            <person name="Kanamori-Katayama M."/>
            <person name="Suzuki M."/>
            <person name="Aoki J."/>
            <person name="Arakawa T."/>
            <person name="Iida J."/>
            <person name="Imamura K."/>
            <person name="Itoh M."/>
            <person name="Kato T."/>
            <person name="Kawaji H."/>
            <person name="Kawagashira N."/>
            <person name="Kawashima T."/>
            <person name="Kojima M."/>
            <person name="Kondo S."/>
            <person name="Konno H."/>
            <person name="Nakano K."/>
            <person name="Ninomiya N."/>
            <person name="Nishio T."/>
            <person name="Okada M."/>
            <person name="Plessy C."/>
            <person name="Shibata K."/>
            <person name="Shiraki T."/>
            <person name="Suzuki S."/>
            <person name="Tagami M."/>
            <person name="Waki K."/>
            <person name="Watahiki A."/>
            <person name="Okamura-Oho Y."/>
            <person name="Suzuki H."/>
            <person name="Kawai J."/>
            <person name="Hayashizaki Y."/>
        </authorList>
    </citation>
    <scope>NUCLEOTIDE SEQUENCE [LARGE SCALE MRNA] OF 135-291</scope>
    <source>
        <strain>C57BL/6J</strain>
        <tissue>Olfactory bulb</tissue>
    </source>
</reference>
<reference key="3">
    <citation type="journal article" date="2003" name="Nat. Rev. Genet.">
        <title>Human and mouse proteases: a comparative genomic approach.</title>
        <authorList>
            <person name="Puente X.S."/>
            <person name="Sanchez L.M."/>
            <person name="Overall C.M."/>
            <person name="Lopez-Otin C."/>
        </authorList>
    </citation>
    <scope>IDENTIFICATION</scope>
</reference>
<keyword id="KW-0175">Coiled coil</keyword>
<keyword id="KW-0378">Hydrolase</keyword>
<keyword id="KW-0479">Metal-binding</keyword>
<keyword id="KW-0482">Metalloprotease</keyword>
<keyword id="KW-0645">Protease</keyword>
<keyword id="KW-1185">Reference proteome</keyword>
<keyword id="KW-0833">Ubl conjugation pathway</keyword>
<keyword id="KW-0862">Zinc</keyword>
<feature type="chain" id="PRO_0000373951" description="Lys-63-specific deubiquitinase BRCC36-like">
    <location>
        <begin position="1"/>
        <end position="291"/>
    </location>
</feature>
<feature type="domain" description="MPN" evidence="3">
    <location>
        <begin position="12"/>
        <end position="179"/>
    </location>
</feature>
<feature type="coiled-coil region" evidence="2">
    <location>
        <begin position="259"/>
        <end position="286"/>
    </location>
</feature>
<feature type="short sequence motif" description="JAMM motif" evidence="3">
    <location>
        <begin position="122"/>
        <end position="135"/>
    </location>
</feature>
<feature type="binding site" evidence="3">
    <location>
        <position position="122"/>
    </location>
    <ligand>
        <name>Zn(2+)</name>
        <dbReference type="ChEBI" id="CHEBI:29105"/>
        <note>catalytic</note>
    </ligand>
</feature>
<feature type="binding site" evidence="3">
    <location>
        <position position="124"/>
    </location>
    <ligand>
        <name>Zn(2+)</name>
        <dbReference type="ChEBI" id="CHEBI:29105"/>
        <note>catalytic</note>
    </ligand>
</feature>
<feature type="binding site" evidence="3">
    <location>
        <position position="135"/>
    </location>
    <ligand>
        <name>Zn(2+)</name>
        <dbReference type="ChEBI" id="CHEBI:29105"/>
        <note>catalytic</note>
    </ligand>
</feature>
<protein>
    <recommendedName>
        <fullName evidence="4">Lys-63-specific deubiquitinase BRCC36-like</fullName>
        <ecNumber>3.4.19.-</ecNumber>
    </recommendedName>
    <alternativeName>
        <fullName evidence="5">BRCA1/BRCA2-containing complex subunit 3-like</fullName>
    </alternativeName>
</protein>
<dbReference type="EC" id="3.4.19.-"/>
<dbReference type="EMBL" id="BC120506">
    <property type="protein sequence ID" value="AAI20507.1"/>
    <property type="molecule type" value="mRNA"/>
</dbReference>
<dbReference type="EMBL" id="BC120508">
    <property type="protein sequence ID" value="AAI20509.1"/>
    <property type="molecule type" value="mRNA"/>
</dbReference>
<dbReference type="EMBL" id="AK134982">
    <property type="protein sequence ID" value="BAE22368.1"/>
    <property type="molecule type" value="mRNA"/>
</dbReference>
<dbReference type="EMBL" id="BN000130">
    <property type="protein sequence ID" value="CAD67592.1"/>
    <property type="molecule type" value="mRNA"/>
</dbReference>
<dbReference type="CCDS" id="CCDS88084.1"/>
<dbReference type="RefSeq" id="NP_988991.1">
    <property type="nucleotide sequence ID" value="NM_203660.2"/>
</dbReference>
<dbReference type="SMR" id="Q7M757"/>
<dbReference type="FunCoup" id="Q7M757">
    <property type="interactions" value="938"/>
</dbReference>
<dbReference type="STRING" id="10090.ENSMUSP00000151516"/>
<dbReference type="MEROPS" id="M67.007"/>
<dbReference type="iPTMnet" id="Q7M757"/>
<dbReference type="PhosphoSitePlus" id="Q7M757"/>
<dbReference type="ProteomicsDB" id="273699"/>
<dbReference type="Pumba" id="Q7M757"/>
<dbReference type="DNASU" id="368203"/>
<dbReference type="Ensembl" id="ENSMUST00000218023.2">
    <property type="protein sequence ID" value="ENSMUSP00000151516.2"/>
    <property type="gene ID" value="ENSMUSG00000112039.2"/>
</dbReference>
<dbReference type="GeneID" id="368203"/>
<dbReference type="KEGG" id="mmu:368203"/>
<dbReference type="UCSC" id="uc007gzj.2">
    <property type="organism name" value="mouse"/>
</dbReference>
<dbReference type="AGR" id="MGI:3647286"/>
<dbReference type="CTD" id="368203"/>
<dbReference type="MGI" id="MGI:3647286">
    <property type="gene designation" value="Brcc3dc"/>
</dbReference>
<dbReference type="VEuPathDB" id="HostDB:ENSMUSG00000112039"/>
<dbReference type="GeneTree" id="ENSGT00390000000360"/>
<dbReference type="InParanoid" id="Q7M757"/>
<dbReference type="OMA" id="CQEEQNA"/>
<dbReference type="OrthoDB" id="446074at2759"/>
<dbReference type="PhylomeDB" id="Q7M757"/>
<dbReference type="BioGRID-ORCS" id="368203">
    <property type="hits" value="0 hits in 10 CRISPR screens"/>
</dbReference>
<dbReference type="PRO" id="PR:Q7M757"/>
<dbReference type="Proteomes" id="UP000000589">
    <property type="component" value="Chromosome 10"/>
</dbReference>
<dbReference type="RNAct" id="Q7M757">
    <property type="molecule type" value="protein"/>
</dbReference>
<dbReference type="Bgee" id="ENSMUSG00000112039">
    <property type="expression patterns" value="Expressed in spermatocyte and 9 other cell types or tissues"/>
</dbReference>
<dbReference type="GO" id="GO:0070531">
    <property type="term" value="C:BRCA1-A complex"/>
    <property type="evidence" value="ECO:0000250"/>
    <property type="project" value="UniProtKB"/>
</dbReference>
<dbReference type="GO" id="GO:0070552">
    <property type="term" value="C:BRISC complex"/>
    <property type="evidence" value="ECO:0000250"/>
    <property type="project" value="UniProtKB"/>
</dbReference>
<dbReference type="GO" id="GO:0005634">
    <property type="term" value="C:nucleus"/>
    <property type="evidence" value="ECO:0000250"/>
    <property type="project" value="UniProtKB"/>
</dbReference>
<dbReference type="GO" id="GO:0004843">
    <property type="term" value="F:cysteine-type deubiquitinase activity"/>
    <property type="evidence" value="ECO:0007669"/>
    <property type="project" value="InterPro"/>
</dbReference>
<dbReference type="GO" id="GO:0046872">
    <property type="term" value="F:metal ion binding"/>
    <property type="evidence" value="ECO:0007669"/>
    <property type="project" value="UniProtKB-KW"/>
</dbReference>
<dbReference type="GO" id="GO:0140492">
    <property type="term" value="F:metal-dependent deubiquitinase activity"/>
    <property type="evidence" value="ECO:0000250"/>
    <property type="project" value="UniProtKB"/>
</dbReference>
<dbReference type="GO" id="GO:0008237">
    <property type="term" value="F:metallopeptidase activity"/>
    <property type="evidence" value="ECO:0000250"/>
    <property type="project" value="UniProtKB"/>
</dbReference>
<dbReference type="GO" id="GO:0031593">
    <property type="term" value="F:polyubiquitin modification-dependent protein binding"/>
    <property type="evidence" value="ECO:0000250"/>
    <property type="project" value="UniProtKB"/>
</dbReference>
<dbReference type="GO" id="GO:0140861">
    <property type="term" value="P:DNA repair-dependent chromatin remodeling"/>
    <property type="evidence" value="ECO:0000250"/>
    <property type="project" value="UniProtKB"/>
</dbReference>
<dbReference type="GO" id="GO:0006302">
    <property type="term" value="P:double-strand break repair"/>
    <property type="evidence" value="ECO:0000250"/>
    <property type="project" value="UniProtKB"/>
</dbReference>
<dbReference type="GO" id="GO:0007095">
    <property type="term" value="P:mitotic G2 DNA damage checkpoint signaling"/>
    <property type="evidence" value="ECO:0000250"/>
    <property type="project" value="UniProtKB"/>
</dbReference>
<dbReference type="GO" id="GO:0045739">
    <property type="term" value="P:positive regulation of DNA repair"/>
    <property type="evidence" value="ECO:0000250"/>
    <property type="project" value="UniProtKB"/>
</dbReference>
<dbReference type="GO" id="GO:0070536">
    <property type="term" value="P:protein K63-linked deubiquitination"/>
    <property type="evidence" value="ECO:0000250"/>
    <property type="project" value="UniProtKB"/>
</dbReference>
<dbReference type="GO" id="GO:0006508">
    <property type="term" value="P:proteolysis"/>
    <property type="evidence" value="ECO:0007669"/>
    <property type="project" value="UniProtKB-KW"/>
</dbReference>
<dbReference type="GO" id="GO:0010212">
    <property type="term" value="P:response to ionizing radiation"/>
    <property type="evidence" value="ECO:0000250"/>
    <property type="project" value="UniProtKB"/>
</dbReference>
<dbReference type="CDD" id="cd08068">
    <property type="entry name" value="MPN_BRCC36"/>
    <property type="match status" value="1"/>
</dbReference>
<dbReference type="FunFam" id="3.40.140.10:FF:000015">
    <property type="entry name" value="Lys-63-specific deubiquitinase BRCC36 isoform 3"/>
    <property type="match status" value="1"/>
</dbReference>
<dbReference type="Gene3D" id="3.40.140.10">
    <property type="entry name" value="Cytidine Deaminase, domain 2"/>
    <property type="match status" value="1"/>
</dbReference>
<dbReference type="InterPro" id="IPR040749">
    <property type="entry name" value="BRCC36_C"/>
</dbReference>
<dbReference type="InterPro" id="IPR000555">
    <property type="entry name" value="JAMM/MPN+_dom"/>
</dbReference>
<dbReference type="InterPro" id="IPR050242">
    <property type="entry name" value="JAMM_MPN+_peptidase_M67A"/>
</dbReference>
<dbReference type="InterPro" id="IPR037518">
    <property type="entry name" value="MPN"/>
</dbReference>
<dbReference type="InterPro" id="IPR033860">
    <property type="entry name" value="MPN_BRCC36"/>
</dbReference>
<dbReference type="PANTHER" id="PTHR10410">
    <property type="entry name" value="EUKARYOTIC TRANSLATION INITIATION FACTOR 3 -RELATED"/>
    <property type="match status" value="1"/>
</dbReference>
<dbReference type="Pfam" id="PF18110">
    <property type="entry name" value="BRCC36_C"/>
    <property type="match status" value="1"/>
</dbReference>
<dbReference type="Pfam" id="PF01398">
    <property type="entry name" value="JAB"/>
    <property type="match status" value="1"/>
</dbReference>
<dbReference type="SMART" id="SM00232">
    <property type="entry name" value="JAB_MPN"/>
    <property type="match status" value="1"/>
</dbReference>
<dbReference type="SUPFAM" id="SSF102712">
    <property type="entry name" value="JAB1/MPN domain"/>
    <property type="match status" value="1"/>
</dbReference>
<dbReference type="PROSITE" id="PS50249">
    <property type="entry name" value="MPN"/>
    <property type="match status" value="1"/>
</dbReference>